<name>1101B_ASFWA</name>
<organismHost>
    <name type="scientific">Ornithodoros</name>
    <name type="common">relapsing fever ticks</name>
    <dbReference type="NCBI Taxonomy" id="6937"/>
</organismHost>
<organismHost>
    <name type="scientific">Phacochoerus aethiopicus</name>
    <name type="common">Warthog</name>
    <dbReference type="NCBI Taxonomy" id="85517"/>
</organismHost>
<organismHost>
    <name type="scientific">Phacochoerus africanus</name>
    <name type="common">Warthog</name>
    <dbReference type="NCBI Taxonomy" id="41426"/>
</organismHost>
<organismHost>
    <name type="scientific">Potamochoerus larvatus</name>
    <name type="common">Bushpig</name>
    <dbReference type="NCBI Taxonomy" id="273792"/>
</organismHost>
<organismHost>
    <name type="scientific">Sus scrofa</name>
    <name type="common">Pig</name>
    <dbReference type="NCBI Taxonomy" id="9823"/>
</organismHost>
<accession>P0C9J3</accession>
<dbReference type="EMBL" id="AY261366">
    <property type="status" value="NOT_ANNOTATED_CDS"/>
    <property type="molecule type" value="Genomic_DNA"/>
</dbReference>
<dbReference type="PDB" id="8JV0">
    <property type="method" value="X-ray"/>
    <property type="resolution" value="2.20 A"/>
    <property type="chains" value="C/F=262-270"/>
</dbReference>
<dbReference type="PDBsum" id="8JV0"/>
<dbReference type="SMR" id="P0C9J3"/>
<dbReference type="Proteomes" id="UP000000858">
    <property type="component" value="Segment"/>
</dbReference>
<dbReference type="GO" id="GO:0033644">
    <property type="term" value="C:host cell membrane"/>
    <property type="evidence" value="ECO:0007669"/>
    <property type="project" value="UniProtKB-SubCell"/>
</dbReference>
<dbReference type="GO" id="GO:0016020">
    <property type="term" value="C:membrane"/>
    <property type="evidence" value="ECO:0007669"/>
    <property type="project" value="UniProtKB-KW"/>
</dbReference>
<dbReference type="InterPro" id="IPR004848">
    <property type="entry name" value="ASFV_fam_110"/>
</dbReference>
<dbReference type="Pfam" id="PF01639">
    <property type="entry name" value="v110"/>
    <property type="match status" value="2"/>
</dbReference>
<evidence type="ECO:0000250" key="1"/>
<evidence type="ECO:0000255" key="2"/>
<evidence type="ECO:0000305" key="3"/>
<reference key="1">
    <citation type="submission" date="2003-03" db="EMBL/GenBank/DDBJ databases">
        <title>African swine fever virus genomes.</title>
        <authorList>
            <person name="Kutish G.F."/>
            <person name="Rock D.L."/>
        </authorList>
    </citation>
    <scope>NUCLEOTIDE SEQUENCE [LARGE SCALE GENOMIC DNA]</scope>
</reference>
<organism>
    <name type="scientific">African swine fever virus (isolate Warthog/Namibia/Wart80/1980)</name>
    <name type="common">ASFV</name>
    <dbReference type="NCBI Taxonomy" id="561444"/>
    <lineage>
        <taxon>Viruses</taxon>
        <taxon>Varidnaviria</taxon>
        <taxon>Bamfordvirae</taxon>
        <taxon>Nucleocytoviricota</taxon>
        <taxon>Pokkesviricetes</taxon>
        <taxon>Asfuvirales</taxon>
        <taxon>Asfarviridae</taxon>
        <taxon>Asfivirus</taxon>
        <taxon>African swine fever virus</taxon>
    </lineage>
</organism>
<protein>
    <recommendedName>
        <fullName>Protein MGF 110-11L</fullName>
    </recommendedName>
</protein>
<proteinExistence type="evidence at protein level"/>
<keyword id="KW-0002">3D-structure</keyword>
<keyword id="KW-0325">Glycoprotein</keyword>
<keyword id="KW-1043">Host membrane</keyword>
<keyword id="KW-0472">Membrane</keyword>
<keyword id="KW-0812">Transmembrane</keyword>
<keyword id="KW-1133">Transmembrane helix</keyword>
<feature type="chain" id="PRO_0000373215" description="Protein MGF 110-11L">
    <location>
        <begin position="1"/>
        <end position="272"/>
    </location>
</feature>
<feature type="transmembrane region" description="Helical" evidence="2">
    <location>
        <begin position="1"/>
        <end position="17"/>
    </location>
</feature>
<feature type="transmembrane region" description="Helical" evidence="2">
    <location>
        <begin position="129"/>
        <end position="149"/>
    </location>
</feature>
<feature type="transmembrane region" description="Helical" evidence="2">
    <location>
        <begin position="156"/>
        <end position="176"/>
    </location>
</feature>
<feature type="glycosylation site" description="N-linked (GlcNAc...) asparagine; by host" evidence="2">
    <location>
        <position position="68"/>
    </location>
</feature>
<feature type="glycosylation site" description="N-linked (GlcNAc...) asparagine; by host" evidence="2">
    <location>
        <position position="264"/>
    </location>
</feature>
<gene>
    <name type="ordered locus">War-022</name>
</gene>
<sequence>MKVLLGLLLGYSVLILAHELPDLPRTQHPPKSELSYWCTYVPQCDFCWDCQDGICKNKITESRFIDSNHSIVNCRVFRDSKTQSCLYEISSKMPNHFNMECLHPRPYTGNEIFMRTWGGGDHQQLSIKQFCLYFIIGIAYTGCFVCALCKNLRLRTTMKLFILLSILVWLAQPVLNRPLSIFYTKQILPRTYTPPMRELEYWCTYGKHCDFCWDCKNGICKNKVLDDMPLIVQNDYISKCSITRFIDRCMYFIEPKIPYIHYMNCSLPTYFS</sequence>
<comment type="function">
    <text evidence="1">Plays a role in virus cell tropism, and may be required for efficient virus replication in macrophages.</text>
</comment>
<comment type="subcellular location">
    <subcellularLocation>
        <location evidence="3">Host membrane</location>
        <topology evidence="3">Multi-pass membrane protein</topology>
    </subcellularLocation>
</comment>
<comment type="similarity">
    <text evidence="3">Belongs to the asfivirus MGF 110 family.</text>
</comment>